<protein>
    <recommendedName>
        <fullName evidence="1">Adenine phosphoribosyltransferase</fullName>
        <shortName evidence="1">APRT</shortName>
        <ecNumber evidence="1">2.4.2.7</ecNumber>
    </recommendedName>
</protein>
<proteinExistence type="inferred from homology"/>
<dbReference type="EC" id="2.4.2.7" evidence="1"/>
<dbReference type="EMBL" id="AE014074">
    <property type="protein sequence ID" value="AAM79247.1"/>
    <property type="molecule type" value="Genomic_DNA"/>
</dbReference>
<dbReference type="RefSeq" id="WP_002990109.1">
    <property type="nucleotide sequence ID" value="NC_004070.1"/>
</dbReference>
<dbReference type="SMR" id="P0CZ62"/>
<dbReference type="KEGG" id="spg:SpyM3_0640"/>
<dbReference type="HOGENOM" id="CLU_063339_3_0_9"/>
<dbReference type="UniPathway" id="UPA00588">
    <property type="reaction ID" value="UER00646"/>
</dbReference>
<dbReference type="Proteomes" id="UP000000564">
    <property type="component" value="Chromosome"/>
</dbReference>
<dbReference type="GO" id="GO:0005737">
    <property type="term" value="C:cytoplasm"/>
    <property type="evidence" value="ECO:0007669"/>
    <property type="project" value="UniProtKB-SubCell"/>
</dbReference>
<dbReference type="GO" id="GO:0002055">
    <property type="term" value="F:adenine binding"/>
    <property type="evidence" value="ECO:0007669"/>
    <property type="project" value="TreeGrafter"/>
</dbReference>
<dbReference type="GO" id="GO:0003999">
    <property type="term" value="F:adenine phosphoribosyltransferase activity"/>
    <property type="evidence" value="ECO:0007669"/>
    <property type="project" value="UniProtKB-UniRule"/>
</dbReference>
<dbReference type="GO" id="GO:0016208">
    <property type="term" value="F:AMP binding"/>
    <property type="evidence" value="ECO:0007669"/>
    <property type="project" value="TreeGrafter"/>
</dbReference>
<dbReference type="GO" id="GO:0006168">
    <property type="term" value="P:adenine salvage"/>
    <property type="evidence" value="ECO:0007669"/>
    <property type="project" value="InterPro"/>
</dbReference>
<dbReference type="GO" id="GO:0044209">
    <property type="term" value="P:AMP salvage"/>
    <property type="evidence" value="ECO:0007669"/>
    <property type="project" value="UniProtKB-UniRule"/>
</dbReference>
<dbReference type="GO" id="GO:0006166">
    <property type="term" value="P:purine ribonucleoside salvage"/>
    <property type="evidence" value="ECO:0007669"/>
    <property type="project" value="UniProtKB-KW"/>
</dbReference>
<dbReference type="CDD" id="cd06223">
    <property type="entry name" value="PRTases_typeI"/>
    <property type="match status" value="1"/>
</dbReference>
<dbReference type="FunFam" id="3.40.50.2020:FF:000004">
    <property type="entry name" value="Adenine phosphoribosyltransferase"/>
    <property type="match status" value="1"/>
</dbReference>
<dbReference type="Gene3D" id="3.40.50.2020">
    <property type="match status" value="1"/>
</dbReference>
<dbReference type="HAMAP" id="MF_00004">
    <property type="entry name" value="Aden_phosphoribosyltr"/>
    <property type="match status" value="1"/>
</dbReference>
<dbReference type="InterPro" id="IPR005764">
    <property type="entry name" value="Ade_phspho_trans"/>
</dbReference>
<dbReference type="InterPro" id="IPR000836">
    <property type="entry name" value="PRibTrfase_dom"/>
</dbReference>
<dbReference type="InterPro" id="IPR029057">
    <property type="entry name" value="PRTase-like"/>
</dbReference>
<dbReference type="InterPro" id="IPR050054">
    <property type="entry name" value="UPRTase/APRTase"/>
</dbReference>
<dbReference type="NCBIfam" id="TIGR01090">
    <property type="entry name" value="apt"/>
    <property type="match status" value="1"/>
</dbReference>
<dbReference type="NCBIfam" id="NF002633">
    <property type="entry name" value="PRK02304.1-2"/>
    <property type="match status" value="1"/>
</dbReference>
<dbReference type="NCBIfam" id="NF002634">
    <property type="entry name" value="PRK02304.1-3"/>
    <property type="match status" value="1"/>
</dbReference>
<dbReference type="NCBIfam" id="NF002636">
    <property type="entry name" value="PRK02304.1-5"/>
    <property type="match status" value="1"/>
</dbReference>
<dbReference type="PANTHER" id="PTHR32315">
    <property type="entry name" value="ADENINE PHOSPHORIBOSYLTRANSFERASE"/>
    <property type="match status" value="1"/>
</dbReference>
<dbReference type="PANTHER" id="PTHR32315:SF3">
    <property type="entry name" value="ADENINE PHOSPHORIBOSYLTRANSFERASE"/>
    <property type="match status" value="1"/>
</dbReference>
<dbReference type="Pfam" id="PF00156">
    <property type="entry name" value="Pribosyltran"/>
    <property type="match status" value="1"/>
</dbReference>
<dbReference type="SUPFAM" id="SSF53271">
    <property type="entry name" value="PRTase-like"/>
    <property type="match status" value="1"/>
</dbReference>
<dbReference type="PROSITE" id="PS00103">
    <property type="entry name" value="PUR_PYR_PR_TRANSFER"/>
    <property type="match status" value="1"/>
</dbReference>
<sequence length="172" mass="18687">MDLTNYIASIKDYPKAGITFRDISPLMADGKAYSYAIREIAQYACDKDIDMVVGPEARGFIIGCPVAVELGIGFAPVRKPGKLPRDVVSADYEKEYGLDTLTMHADAIKPGQRVLIVDDLLATGGTVKATIEMIEKLGGIVAGCAFLIELEGLNGRHAIRNYDYKVLMQFPG</sequence>
<gene>
    <name evidence="1" type="primary">apt</name>
    <name type="ordered locus">SpyM3_0640</name>
</gene>
<keyword id="KW-0963">Cytoplasm</keyword>
<keyword id="KW-0328">Glycosyltransferase</keyword>
<keyword id="KW-0660">Purine salvage</keyword>
<keyword id="KW-0808">Transferase</keyword>
<name>APT_STRP3</name>
<comment type="function">
    <text evidence="1">Catalyzes a salvage reaction resulting in the formation of AMP, that is energically less costly than de novo synthesis.</text>
</comment>
<comment type="catalytic activity">
    <reaction evidence="1">
        <text>AMP + diphosphate = 5-phospho-alpha-D-ribose 1-diphosphate + adenine</text>
        <dbReference type="Rhea" id="RHEA:16609"/>
        <dbReference type="ChEBI" id="CHEBI:16708"/>
        <dbReference type="ChEBI" id="CHEBI:33019"/>
        <dbReference type="ChEBI" id="CHEBI:58017"/>
        <dbReference type="ChEBI" id="CHEBI:456215"/>
        <dbReference type="EC" id="2.4.2.7"/>
    </reaction>
</comment>
<comment type="pathway">
    <text evidence="1">Purine metabolism; AMP biosynthesis via salvage pathway; AMP from adenine: step 1/1.</text>
</comment>
<comment type="subunit">
    <text evidence="1">Homodimer.</text>
</comment>
<comment type="subcellular location">
    <subcellularLocation>
        <location evidence="1">Cytoplasm</location>
    </subcellularLocation>
</comment>
<comment type="similarity">
    <text evidence="1">Belongs to the purine/pyrimidine phosphoribosyltransferase family.</text>
</comment>
<accession>P0CZ62</accession>
<accession>P63547</accession>
<accession>Q9A053</accession>
<feature type="chain" id="PRO_0000149468" description="Adenine phosphoribosyltransferase">
    <location>
        <begin position="1"/>
        <end position="172"/>
    </location>
</feature>
<reference key="1">
    <citation type="journal article" date="2002" name="Proc. Natl. Acad. Sci. U.S.A.">
        <title>Genome sequence of a serotype M3 strain of group A Streptococcus: phage-encoded toxins, the high-virulence phenotype, and clone emergence.</title>
        <authorList>
            <person name="Beres S.B."/>
            <person name="Sylva G.L."/>
            <person name="Barbian K.D."/>
            <person name="Lei B."/>
            <person name="Hoff J.S."/>
            <person name="Mammarella N.D."/>
            <person name="Liu M.-Y."/>
            <person name="Smoot J.C."/>
            <person name="Porcella S.F."/>
            <person name="Parkins L.D."/>
            <person name="Campbell D.S."/>
            <person name="Smith T.M."/>
            <person name="McCormick J.K."/>
            <person name="Leung D.Y.M."/>
            <person name="Schlievert P.M."/>
            <person name="Musser J.M."/>
        </authorList>
    </citation>
    <scope>NUCLEOTIDE SEQUENCE [LARGE SCALE GENOMIC DNA]</scope>
    <source>
        <strain>ATCC BAA-595 / MGAS315</strain>
    </source>
</reference>
<evidence type="ECO:0000255" key="1">
    <source>
        <dbReference type="HAMAP-Rule" id="MF_00004"/>
    </source>
</evidence>
<organism>
    <name type="scientific">Streptococcus pyogenes serotype M3 (strain ATCC BAA-595 / MGAS315)</name>
    <dbReference type="NCBI Taxonomy" id="198466"/>
    <lineage>
        <taxon>Bacteria</taxon>
        <taxon>Bacillati</taxon>
        <taxon>Bacillota</taxon>
        <taxon>Bacilli</taxon>
        <taxon>Lactobacillales</taxon>
        <taxon>Streptococcaceae</taxon>
        <taxon>Streptococcus</taxon>
    </lineage>
</organism>